<gene>
    <name evidence="1" type="primary">rpsG</name>
    <name type="ordered locus">PSPTO_0622</name>
</gene>
<reference key="1">
    <citation type="journal article" date="2003" name="Proc. Natl. Acad. Sci. U.S.A.">
        <title>The complete genome sequence of the Arabidopsis and tomato pathogen Pseudomonas syringae pv. tomato DC3000.</title>
        <authorList>
            <person name="Buell C.R."/>
            <person name="Joardar V."/>
            <person name="Lindeberg M."/>
            <person name="Selengut J."/>
            <person name="Paulsen I.T."/>
            <person name="Gwinn M.L."/>
            <person name="Dodson R.J."/>
            <person name="DeBoy R.T."/>
            <person name="Durkin A.S."/>
            <person name="Kolonay J.F."/>
            <person name="Madupu R."/>
            <person name="Daugherty S.C."/>
            <person name="Brinkac L.M."/>
            <person name="Beanan M.J."/>
            <person name="Haft D.H."/>
            <person name="Nelson W.C."/>
            <person name="Davidsen T.M."/>
            <person name="Zafar N."/>
            <person name="Zhou L."/>
            <person name="Liu J."/>
            <person name="Yuan Q."/>
            <person name="Khouri H.M."/>
            <person name="Fedorova N.B."/>
            <person name="Tran B."/>
            <person name="Russell D."/>
            <person name="Berry K.J."/>
            <person name="Utterback T.R."/>
            <person name="Van Aken S.E."/>
            <person name="Feldblyum T.V."/>
            <person name="D'Ascenzo M."/>
            <person name="Deng W.-L."/>
            <person name="Ramos A.R."/>
            <person name="Alfano J.R."/>
            <person name="Cartinhour S."/>
            <person name="Chatterjee A.K."/>
            <person name="Delaney T.P."/>
            <person name="Lazarowitz S.G."/>
            <person name="Martin G.B."/>
            <person name="Schneider D.J."/>
            <person name="Tang X."/>
            <person name="Bender C.L."/>
            <person name="White O."/>
            <person name="Fraser C.M."/>
            <person name="Collmer A."/>
        </authorList>
    </citation>
    <scope>NUCLEOTIDE SEQUENCE [LARGE SCALE GENOMIC DNA]</scope>
    <source>
        <strain>ATCC BAA-871 / DC3000</strain>
    </source>
</reference>
<sequence length="156" mass="17666">MPRRRVAAKREVLDDPKYGSQILAKFMNHVMESGKKAVAERIVYGALEKVKERKNSDPLEIFEKALDAIAPLVEVKSRRVGGATYQVPVEVRPSRRNALAMRWLVDFARKRGEKSMALRLAGELMDAAEGKGAAVKKREDVHRMAEANKAFSHYRF</sequence>
<comment type="function">
    <text evidence="1">One of the primary rRNA binding proteins, it binds directly to 16S rRNA where it nucleates assembly of the head domain of the 30S subunit. Is located at the subunit interface close to the decoding center, probably blocks exit of the E-site tRNA.</text>
</comment>
<comment type="subunit">
    <text evidence="1">Part of the 30S ribosomal subunit. Contacts proteins S9 and S11.</text>
</comment>
<comment type="similarity">
    <text evidence="1">Belongs to the universal ribosomal protein uS7 family.</text>
</comment>
<evidence type="ECO:0000255" key="1">
    <source>
        <dbReference type="HAMAP-Rule" id="MF_00480"/>
    </source>
</evidence>
<evidence type="ECO:0000305" key="2"/>
<organism>
    <name type="scientific">Pseudomonas syringae pv. tomato (strain ATCC BAA-871 / DC3000)</name>
    <dbReference type="NCBI Taxonomy" id="223283"/>
    <lineage>
        <taxon>Bacteria</taxon>
        <taxon>Pseudomonadati</taxon>
        <taxon>Pseudomonadota</taxon>
        <taxon>Gammaproteobacteria</taxon>
        <taxon>Pseudomonadales</taxon>
        <taxon>Pseudomonadaceae</taxon>
        <taxon>Pseudomonas</taxon>
    </lineage>
</organism>
<dbReference type="EMBL" id="AE016853">
    <property type="protein sequence ID" value="AAO54164.1"/>
    <property type="molecule type" value="Genomic_DNA"/>
</dbReference>
<dbReference type="RefSeq" id="NP_790469.1">
    <property type="nucleotide sequence ID" value="NC_004578.1"/>
</dbReference>
<dbReference type="RefSeq" id="WP_004397077.1">
    <property type="nucleotide sequence ID" value="NC_004578.1"/>
</dbReference>
<dbReference type="SMR" id="Q889X5"/>
<dbReference type="STRING" id="223283.PSPTO_0622"/>
<dbReference type="GeneID" id="73733815"/>
<dbReference type="KEGG" id="pst:PSPTO_0622"/>
<dbReference type="PATRIC" id="fig|223283.9.peg.628"/>
<dbReference type="eggNOG" id="COG0049">
    <property type="taxonomic scope" value="Bacteria"/>
</dbReference>
<dbReference type="HOGENOM" id="CLU_072226_1_1_6"/>
<dbReference type="OrthoDB" id="9807653at2"/>
<dbReference type="PhylomeDB" id="Q889X5"/>
<dbReference type="Proteomes" id="UP000002515">
    <property type="component" value="Chromosome"/>
</dbReference>
<dbReference type="GO" id="GO:0015935">
    <property type="term" value="C:small ribosomal subunit"/>
    <property type="evidence" value="ECO:0007669"/>
    <property type="project" value="InterPro"/>
</dbReference>
<dbReference type="GO" id="GO:0019843">
    <property type="term" value="F:rRNA binding"/>
    <property type="evidence" value="ECO:0007669"/>
    <property type="project" value="UniProtKB-UniRule"/>
</dbReference>
<dbReference type="GO" id="GO:0003735">
    <property type="term" value="F:structural constituent of ribosome"/>
    <property type="evidence" value="ECO:0007669"/>
    <property type="project" value="InterPro"/>
</dbReference>
<dbReference type="GO" id="GO:0000049">
    <property type="term" value="F:tRNA binding"/>
    <property type="evidence" value="ECO:0007669"/>
    <property type="project" value="UniProtKB-UniRule"/>
</dbReference>
<dbReference type="GO" id="GO:0006412">
    <property type="term" value="P:translation"/>
    <property type="evidence" value="ECO:0007669"/>
    <property type="project" value="UniProtKB-UniRule"/>
</dbReference>
<dbReference type="CDD" id="cd14869">
    <property type="entry name" value="uS7_Bacteria"/>
    <property type="match status" value="1"/>
</dbReference>
<dbReference type="FunFam" id="1.10.455.10:FF:000001">
    <property type="entry name" value="30S ribosomal protein S7"/>
    <property type="match status" value="1"/>
</dbReference>
<dbReference type="Gene3D" id="1.10.455.10">
    <property type="entry name" value="Ribosomal protein S7 domain"/>
    <property type="match status" value="1"/>
</dbReference>
<dbReference type="HAMAP" id="MF_00480_B">
    <property type="entry name" value="Ribosomal_uS7_B"/>
    <property type="match status" value="1"/>
</dbReference>
<dbReference type="InterPro" id="IPR000235">
    <property type="entry name" value="Ribosomal_uS7"/>
</dbReference>
<dbReference type="InterPro" id="IPR005717">
    <property type="entry name" value="Ribosomal_uS7_bac/org-type"/>
</dbReference>
<dbReference type="InterPro" id="IPR020606">
    <property type="entry name" value="Ribosomal_uS7_CS"/>
</dbReference>
<dbReference type="InterPro" id="IPR023798">
    <property type="entry name" value="Ribosomal_uS7_dom"/>
</dbReference>
<dbReference type="InterPro" id="IPR036823">
    <property type="entry name" value="Ribosomal_uS7_dom_sf"/>
</dbReference>
<dbReference type="NCBIfam" id="TIGR01029">
    <property type="entry name" value="rpsG_bact"/>
    <property type="match status" value="1"/>
</dbReference>
<dbReference type="PANTHER" id="PTHR11205">
    <property type="entry name" value="RIBOSOMAL PROTEIN S7"/>
    <property type="match status" value="1"/>
</dbReference>
<dbReference type="Pfam" id="PF00177">
    <property type="entry name" value="Ribosomal_S7"/>
    <property type="match status" value="1"/>
</dbReference>
<dbReference type="PIRSF" id="PIRSF002122">
    <property type="entry name" value="RPS7p_RPS7a_RPS5e_RPS7o"/>
    <property type="match status" value="1"/>
</dbReference>
<dbReference type="SUPFAM" id="SSF47973">
    <property type="entry name" value="Ribosomal protein S7"/>
    <property type="match status" value="1"/>
</dbReference>
<dbReference type="PROSITE" id="PS00052">
    <property type="entry name" value="RIBOSOMAL_S7"/>
    <property type="match status" value="1"/>
</dbReference>
<name>RS7_PSESM</name>
<keyword id="KW-1185">Reference proteome</keyword>
<keyword id="KW-0687">Ribonucleoprotein</keyword>
<keyword id="KW-0689">Ribosomal protein</keyword>
<keyword id="KW-0694">RNA-binding</keyword>
<keyword id="KW-0699">rRNA-binding</keyword>
<keyword id="KW-0820">tRNA-binding</keyword>
<feature type="chain" id="PRO_0000124324" description="Small ribosomal subunit protein uS7">
    <location>
        <begin position="1"/>
        <end position="156"/>
    </location>
</feature>
<protein>
    <recommendedName>
        <fullName evidence="1">Small ribosomal subunit protein uS7</fullName>
    </recommendedName>
    <alternativeName>
        <fullName evidence="2">30S ribosomal protein S7</fullName>
    </alternativeName>
</protein>
<accession>Q889X5</accession>
<proteinExistence type="inferred from homology"/>